<name>VP37C_HUMAN</name>
<evidence type="ECO:0000250" key="1">
    <source>
        <dbReference type="UniProtKB" id="Q8R105"/>
    </source>
</evidence>
<evidence type="ECO:0000255" key="2">
    <source>
        <dbReference type="PROSITE-ProRule" id="PRU00646"/>
    </source>
</evidence>
<evidence type="ECO:0000256" key="3">
    <source>
        <dbReference type="SAM" id="MobiDB-lite"/>
    </source>
</evidence>
<evidence type="ECO:0000269" key="4">
    <source>
    </source>
</evidence>
<evidence type="ECO:0000269" key="5">
    <source>
    </source>
</evidence>
<evidence type="ECO:0000269" key="6">
    <source>
    </source>
</evidence>
<evidence type="ECO:0000269" key="7">
    <source>
    </source>
</evidence>
<evidence type="ECO:0000269" key="8">
    <source>
    </source>
</evidence>
<evidence type="ECO:0000269" key="9">
    <source>
    </source>
</evidence>
<evidence type="ECO:0000269" key="10">
    <source>
    </source>
</evidence>
<evidence type="ECO:0000269" key="11">
    <source ref="3"/>
</evidence>
<evidence type="ECO:0000305" key="12"/>
<evidence type="ECO:0000305" key="13">
    <source>
    </source>
</evidence>
<gene>
    <name type="primary">VPS37C</name>
    <name type="synonym">PML39</name>
</gene>
<proteinExistence type="evidence at protein level"/>
<keyword id="KW-0967">Endosome</keyword>
<keyword id="KW-0472">Membrane</keyword>
<keyword id="KW-0597">Phosphoprotein</keyword>
<keyword id="KW-0653">Protein transport</keyword>
<keyword id="KW-1267">Proteomics identification</keyword>
<keyword id="KW-1185">Reference proteome</keyword>
<keyword id="KW-0813">Transport</keyword>
<dbReference type="EMBL" id="AL834261">
    <property type="protein sequence ID" value="CAD38936.1"/>
    <property type="status" value="ALT_INIT"/>
    <property type="molecule type" value="mRNA"/>
</dbReference>
<dbReference type="EMBL" id="AP000437">
    <property type="status" value="NOT_ANNOTATED_CDS"/>
    <property type="molecule type" value="Genomic_DNA"/>
</dbReference>
<dbReference type="EMBL" id="CH471076">
    <property type="protein sequence ID" value="EAW73925.1"/>
    <property type="molecule type" value="Genomic_DNA"/>
</dbReference>
<dbReference type="EMBL" id="BC141827">
    <property type="protein sequence ID" value="AAI41828.1"/>
    <property type="molecule type" value="mRNA"/>
</dbReference>
<dbReference type="EMBL" id="BC142702">
    <property type="protein sequence ID" value="AAI42703.1"/>
    <property type="molecule type" value="mRNA"/>
</dbReference>
<dbReference type="CCDS" id="CCDS31573.1"/>
<dbReference type="RefSeq" id="NP_060436.4">
    <property type="nucleotide sequence ID" value="NM_017966.4"/>
</dbReference>
<dbReference type="RefSeq" id="XP_005274134.1">
    <property type="nucleotide sequence ID" value="XM_005274077.4"/>
</dbReference>
<dbReference type="SMR" id="A5D8V6"/>
<dbReference type="BioGRID" id="120371">
    <property type="interactions" value="146"/>
</dbReference>
<dbReference type="ComplexPortal" id="CPX-7147">
    <property type="entry name" value="ESCRT-I complex, VPS37C-MVB12A variant"/>
</dbReference>
<dbReference type="ComplexPortal" id="CPX-7166">
    <property type="entry name" value="ESCRT-I complex, VPS37C-MVB12B variant"/>
</dbReference>
<dbReference type="ComplexPortal" id="CPX-7202">
    <property type="entry name" value="ESCRT-I complex, VPS37C-UBAP1 variant"/>
</dbReference>
<dbReference type="CORUM" id="A5D8V6"/>
<dbReference type="FunCoup" id="A5D8V6">
    <property type="interactions" value="576"/>
</dbReference>
<dbReference type="IntAct" id="A5D8V6">
    <property type="interactions" value="118"/>
</dbReference>
<dbReference type="MINT" id="A5D8V6"/>
<dbReference type="STRING" id="9606.ENSP00000301765"/>
<dbReference type="MoonDB" id="A5D8V6">
    <property type="type" value="Predicted"/>
</dbReference>
<dbReference type="GlyGen" id="A5D8V6">
    <property type="glycosylation" value="2 sites, 1 O-linked glycan (1 site)"/>
</dbReference>
<dbReference type="iPTMnet" id="A5D8V6"/>
<dbReference type="PhosphoSitePlus" id="A5D8V6"/>
<dbReference type="BioMuta" id="VPS37C"/>
<dbReference type="jPOST" id="A5D8V6"/>
<dbReference type="MassIVE" id="A5D8V6"/>
<dbReference type="PaxDb" id="9606-ENSP00000301765"/>
<dbReference type="PeptideAtlas" id="A5D8V6"/>
<dbReference type="ProteomicsDB" id="712"/>
<dbReference type="Pumba" id="A5D8V6"/>
<dbReference type="Antibodypedia" id="28060">
    <property type="antibodies" value="143 antibodies from 28 providers"/>
</dbReference>
<dbReference type="DNASU" id="55048"/>
<dbReference type="Ensembl" id="ENST00000301765.10">
    <property type="protein sequence ID" value="ENSP00000301765.5"/>
    <property type="gene ID" value="ENSG00000167987.11"/>
</dbReference>
<dbReference type="GeneID" id="55048"/>
<dbReference type="KEGG" id="hsa:55048"/>
<dbReference type="MANE-Select" id="ENST00000301765.10">
    <property type="protein sequence ID" value="ENSP00000301765.5"/>
    <property type="RefSeq nucleotide sequence ID" value="NM_017966.5"/>
    <property type="RefSeq protein sequence ID" value="NP_060436.4"/>
</dbReference>
<dbReference type="UCSC" id="uc001nqv.2">
    <property type="organism name" value="human"/>
</dbReference>
<dbReference type="AGR" id="HGNC:26097"/>
<dbReference type="CTD" id="55048"/>
<dbReference type="DisGeNET" id="55048"/>
<dbReference type="GeneCards" id="VPS37C"/>
<dbReference type="HGNC" id="HGNC:26097">
    <property type="gene designation" value="VPS37C"/>
</dbReference>
<dbReference type="HPA" id="ENSG00000167987">
    <property type="expression patterns" value="Low tissue specificity"/>
</dbReference>
<dbReference type="MIM" id="610038">
    <property type="type" value="gene"/>
</dbReference>
<dbReference type="neXtProt" id="NX_A5D8V6"/>
<dbReference type="OpenTargets" id="ENSG00000167987"/>
<dbReference type="PharmGKB" id="PA142670617"/>
<dbReference type="VEuPathDB" id="HostDB:ENSG00000167987"/>
<dbReference type="eggNOG" id="KOG3270">
    <property type="taxonomic scope" value="Eukaryota"/>
</dbReference>
<dbReference type="GeneTree" id="ENSGT00950000183012"/>
<dbReference type="HOGENOM" id="CLU_067118_0_0_1"/>
<dbReference type="InParanoid" id="A5D8V6"/>
<dbReference type="OMA" id="PMYRAGY"/>
<dbReference type="OrthoDB" id="10004364at2759"/>
<dbReference type="PAN-GO" id="A5D8V6">
    <property type="GO annotations" value="4 GO annotations based on evolutionary models"/>
</dbReference>
<dbReference type="PhylomeDB" id="A5D8V6"/>
<dbReference type="TreeFam" id="TF321840"/>
<dbReference type="PathwayCommons" id="A5D8V6"/>
<dbReference type="Reactome" id="R-HSA-162588">
    <property type="pathway name" value="Budding and maturation of HIV virion"/>
</dbReference>
<dbReference type="Reactome" id="R-HSA-174490">
    <property type="pathway name" value="Membrane binding and targetting of GAG proteins"/>
</dbReference>
<dbReference type="Reactome" id="R-HSA-917729">
    <property type="pathway name" value="Endosomal Sorting Complex Required For Transport (ESCRT)"/>
</dbReference>
<dbReference type="Reactome" id="R-HSA-9610379">
    <property type="pathway name" value="HCMV Late Events"/>
</dbReference>
<dbReference type="Reactome" id="R-HSA-9615710">
    <property type="pathway name" value="Late endosomal microautophagy"/>
</dbReference>
<dbReference type="SignaLink" id="A5D8V6"/>
<dbReference type="BioGRID-ORCS" id="55048">
    <property type="hits" value="96 hits in 1159 CRISPR screens"/>
</dbReference>
<dbReference type="ChiTaRS" id="VPS37C">
    <property type="organism name" value="human"/>
</dbReference>
<dbReference type="GenomeRNAi" id="55048"/>
<dbReference type="Pharos" id="A5D8V6">
    <property type="development level" value="Tbio"/>
</dbReference>
<dbReference type="PRO" id="PR:A5D8V6"/>
<dbReference type="Proteomes" id="UP000005640">
    <property type="component" value="Chromosome 11"/>
</dbReference>
<dbReference type="RNAct" id="A5D8V6">
    <property type="molecule type" value="protein"/>
</dbReference>
<dbReference type="Bgee" id="ENSG00000167987">
    <property type="expression patterns" value="Expressed in secondary oocyte and 200 other cell types or tissues"/>
</dbReference>
<dbReference type="ExpressionAtlas" id="A5D8V6">
    <property type="expression patterns" value="baseline and differential"/>
</dbReference>
<dbReference type="GO" id="GO:0005929">
    <property type="term" value="C:cilium"/>
    <property type="evidence" value="ECO:0000314"/>
    <property type="project" value="HPA"/>
</dbReference>
<dbReference type="GO" id="GO:0010008">
    <property type="term" value="C:endosome membrane"/>
    <property type="evidence" value="ECO:0000304"/>
    <property type="project" value="Reactome"/>
</dbReference>
<dbReference type="GO" id="GO:0000813">
    <property type="term" value="C:ESCRT I complex"/>
    <property type="evidence" value="ECO:0000314"/>
    <property type="project" value="UniProtKB"/>
</dbReference>
<dbReference type="GO" id="GO:0070062">
    <property type="term" value="C:extracellular exosome"/>
    <property type="evidence" value="ECO:0007005"/>
    <property type="project" value="UniProtKB"/>
</dbReference>
<dbReference type="GO" id="GO:0005794">
    <property type="term" value="C:Golgi apparatus"/>
    <property type="evidence" value="ECO:0000314"/>
    <property type="project" value="HPA"/>
</dbReference>
<dbReference type="GO" id="GO:0043231">
    <property type="term" value="C:intracellular membrane-bounded organelle"/>
    <property type="evidence" value="ECO:0000314"/>
    <property type="project" value="HPA"/>
</dbReference>
<dbReference type="GO" id="GO:0031902">
    <property type="term" value="C:late endosome membrane"/>
    <property type="evidence" value="ECO:0007669"/>
    <property type="project" value="UniProtKB-SubCell"/>
</dbReference>
<dbReference type="GO" id="GO:0005654">
    <property type="term" value="C:nucleoplasm"/>
    <property type="evidence" value="ECO:0000314"/>
    <property type="project" value="HPA"/>
</dbReference>
<dbReference type="GO" id="GO:0048306">
    <property type="term" value="F:calcium-dependent protein binding"/>
    <property type="evidence" value="ECO:0000353"/>
    <property type="project" value="UniProtKB"/>
</dbReference>
<dbReference type="GO" id="GO:0016236">
    <property type="term" value="P:macroautophagy"/>
    <property type="evidence" value="ECO:0000304"/>
    <property type="project" value="ParkinsonsUK-UCL"/>
</dbReference>
<dbReference type="GO" id="GO:0090148">
    <property type="term" value="P:membrane fission"/>
    <property type="evidence" value="ECO:0000303"/>
    <property type="project" value="ComplexPortal"/>
</dbReference>
<dbReference type="GO" id="GO:0036258">
    <property type="term" value="P:multivesicular body assembly"/>
    <property type="evidence" value="ECO:0000304"/>
    <property type="project" value="ParkinsonsUK-UCL"/>
</dbReference>
<dbReference type="GO" id="GO:0006612">
    <property type="term" value="P:protein targeting to membrane"/>
    <property type="evidence" value="ECO:0000318"/>
    <property type="project" value="GO_Central"/>
</dbReference>
<dbReference type="GO" id="GO:0006623">
    <property type="term" value="P:protein targeting to vacuole"/>
    <property type="evidence" value="ECO:0000318"/>
    <property type="project" value="GO_Central"/>
</dbReference>
<dbReference type="GO" id="GO:0043328">
    <property type="term" value="P:protein transport to vacuole involved in ubiquitin-dependent protein catabolic process via the multivesicular body sorting pathway"/>
    <property type="evidence" value="ECO:0000303"/>
    <property type="project" value="ComplexPortal"/>
</dbReference>
<dbReference type="GO" id="GO:0043162">
    <property type="term" value="P:ubiquitin-dependent protein catabolic process via the multivesicular body sorting pathway"/>
    <property type="evidence" value="ECO:0000318"/>
    <property type="project" value="GO_Central"/>
</dbReference>
<dbReference type="GO" id="GO:0039702">
    <property type="term" value="P:viral budding via host ESCRT complex"/>
    <property type="evidence" value="ECO:0000304"/>
    <property type="project" value="ParkinsonsUK-UCL"/>
</dbReference>
<dbReference type="FunFam" id="1.10.287.660:FF:000003">
    <property type="entry name" value="vacuolar protein sorting-associated protein 37B"/>
    <property type="match status" value="1"/>
</dbReference>
<dbReference type="Gene3D" id="1.10.287.660">
    <property type="entry name" value="Helix hairpin bin"/>
    <property type="match status" value="1"/>
</dbReference>
<dbReference type="InterPro" id="IPR037202">
    <property type="entry name" value="ESCRT_assembly_dom"/>
</dbReference>
<dbReference type="InterPro" id="IPR029012">
    <property type="entry name" value="Helix_hairpin_bin_sf"/>
</dbReference>
<dbReference type="InterPro" id="IPR009851">
    <property type="entry name" value="Mod_r"/>
</dbReference>
<dbReference type="PANTHER" id="PTHR13678">
    <property type="entry name" value="VACUOLAR PROTEIN SORTING-ASSOCIATED PROTEIN 37"/>
    <property type="match status" value="1"/>
</dbReference>
<dbReference type="PANTHER" id="PTHR13678:SF8">
    <property type="entry name" value="VACUOLAR PROTEIN SORTING-ASSOCIATED PROTEIN 37C"/>
    <property type="match status" value="1"/>
</dbReference>
<dbReference type="Pfam" id="PF07200">
    <property type="entry name" value="Mod_r"/>
    <property type="match status" value="1"/>
</dbReference>
<dbReference type="SUPFAM" id="SSF140111">
    <property type="entry name" value="Endosomal sorting complex assembly domain"/>
    <property type="match status" value="1"/>
</dbReference>
<dbReference type="PROSITE" id="PS51314">
    <property type="entry name" value="VPS37_C"/>
    <property type="match status" value="1"/>
</dbReference>
<organism>
    <name type="scientific">Homo sapiens</name>
    <name type="common">Human</name>
    <dbReference type="NCBI Taxonomy" id="9606"/>
    <lineage>
        <taxon>Eukaryota</taxon>
        <taxon>Metazoa</taxon>
        <taxon>Chordata</taxon>
        <taxon>Craniata</taxon>
        <taxon>Vertebrata</taxon>
        <taxon>Euteleostomi</taxon>
        <taxon>Mammalia</taxon>
        <taxon>Eutheria</taxon>
        <taxon>Euarchontoglires</taxon>
        <taxon>Primates</taxon>
        <taxon>Haplorrhini</taxon>
        <taxon>Catarrhini</taxon>
        <taxon>Hominidae</taxon>
        <taxon>Homo</taxon>
    </lineage>
</organism>
<sequence length="355" mass="38659">METLKDKTLQELEELQNDSEAIDQLALESPEVQDLQLEREMALATNRSLAERNLEFQGPLEISRSNLSDRYQELRKLVERCQEQKAKLEKFSSALQPGTLLDLLQVEGMKIEEESEAMAEKFLEGEVPLETFLENFSSMRMLSHLRRVRVEKLQEVVRKPRASQELAGDAPPPRPPPPVRPVPQGTPPVVEEQPQPPLAMPPYPLPYSPSPSLPVGPTAHGALPPAPFPVVSQPSFYSGPLGPTYPAAQLGPRGAAGYSWSPQRSMPPRPGYPGTPMGASGPGYPLRGGRAPSPGYPQQSPYPATGGKPPYPIQPQLPSFPGQPQPSVPLQPPYPPGPAPPYGFPPPPGPAWPGY</sequence>
<comment type="function">
    <text evidence="5">Component of the ESCRT-I complex, a regulator of vesicular trafficking process. Required for the sorting of endocytic ubiquitinated cargos into multivesicular bodies. May be involved in cell growth and differentiation.</text>
</comment>
<comment type="subunit">
    <text evidence="5 6 8 10">Component of the ESCRT-I complex (endosomal sorting complex required for transport I) which consists of TSG101, VPS28, a VPS37 protein (VPS37A to -D) and MVB12A or MVB12B in a 1:1:1:1 stoichiometry. Interacts with TSG101, VPS28, MVB12A and MVB12B. Component of the ESCRT-I complex (endosomal sorting complex required for transport I) which consists of TSG101, VPS28, a VPS37 protein (VPS37A to -D) and UBAP1 in a 1:1:1:1 stoichiometry. Interacts with HGS and STAM2. Interacts with CEP55.</text>
</comment>
<comment type="interaction">
    <interactant intactId="EBI-2559305">
        <id>A5D8V6</id>
    </interactant>
    <interactant intactId="EBI-5463075">
        <id>Q4LEZ3</id>
        <label>AARD</label>
    </interactant>
    <organismsDiffer>false</organismsDiffer>
    <experiments>3</experiments>
</comment>
<comment type="interaction">
    <interactant intactId="EBI-2559305">
        <id>A5D8V6</id>
    </interactant>
    <interactant intactId="EBI-12318443">
        <id>Q8NFV4-4</id>
        <label>ABHD11</label>
    </interactant>
    <organismsDiffer>false</organismsDiffer>
    <experiments>3</experiments>
</comment>
<comment type="interaction">
    <interactant intactId="EBI-2559305">
        <id>A5D8V6</id>
    </interactant>
    <interactant intactId="EBI-12108222">
        <id>Q9NQ33</id>
        <label>ASCL3</label>
    </interactant>
    <organismsDiffer>false</organismsDiffer>
    <experiments>3</experiments>
</comment>
<comment type="interaction">
    <interactant intactId="EBI-2559305">
        <id>A5D8V6</id>
    </interactant>
    <interactant intactId="EBI-2949658">
        <id>O95429</id>
        <label>BAG4</label>
    </interactant>
    <organismsDiffer>false</organismsDiffer>
    <experiments>3</experiments>
</comment>
<comment type="interaction">
    <interactant intactId="EBI-2559305">
        <id>A5D8V6</id>
    </interactant>
    <interactant intactId="EBI-517623">
        <id>Q96CA5</id>
        <label>BIRC7</label>
    </interactant>
    <organismsDiffer>false</organismsDiffer>
    <experiments>3</experiments>
</comment>
<comment type="interaction">
    <interactant intactId="EBI-2559305">
        <id>A5D8V6</id>
    </interactant>
    <interactant intactId="EBI-946029">
        <id>Q6P1W5</id>
        <label>C1orf94</label>
    </interactant>
    <organismsDiffer>false</organismsDiffer>
    <experiments>6</experiments>
</comment>
<comment type="interaction">
    <interactant intactId="EBI-2559305">
        <id>A5D8V6</id>
    </interactant>
    <interactant intactId="EBI-747776">
        <id>Q53EZ4</id>
        <label>CEP55</label>
    </interactant>
    <organismsDiffer>false</organismsDiffer>
    <experiments>8</experiments>
</comment>
<comment type="interaction">
    <interactant intactId="EBI-2559305">
        <id>A5D8V6</id>
    </interactant>
    <interactant intactId="EBI-748171">
        <id>O43186</id>
        <label>CRX</label>
    </interactant>
    <organismsDiffer>false</organismsDiffer>
    <experiments>3</experiments>
</comment>
<comment type="interaction">
    <interactant intactId="EBI-2559305">
        <id>A5D8V6</id>
    </interactant>
    <interactant intactId="EBI-724310">
        <id>Q15038</id>
        <label>DAZAP2</label>
    </interactant>
    <organismsDiffer>false</organismsDiffer>
    <experiments>6</experiments>
</comment>
<comment type="interaction">
    <interactant intactId="EBI-2559305">
        <id>A5D8V6</id>
    </interactant>
    <interactant intactId="EBI-12091947">
        <id>O75935-2</id>
        <label>DCTN3</label>
    </interactant>
    <organismsDiffer>false</organismsDiffer>
    <experiments>3</experiments>
</comment>
<comment type="interaction">
    <interactant intactId="EBI-2559305">
        <id>A5D8V6</id>
    </interactant>
    <interactant intactId="EBI-742651">
        <id>P35638</id>
        <label>DDIT3</label>
    </interactant>
    <organismsDiffer>false</organismsDiffer>
    <experiments>3</experiments>
</comment>
<comment type="interaction">
    <interactant intactId="EBI-2559305">
        <id>A5D8V6</id>
    </interactant>
    <interactant intactId="EBI-10173632">
        <id>P35638-2</id>
        <label>DDIT3</label>
    </interactant>
    <organismsDiffer>false</organismsDiffer>
    <experiments>3</experiments>
</comment>
<comment type="interaction">
    <interactant intactId="EBI-2559305">
        <id>A5D8V6</id>
    </interactant>
    <interactant intactId="EBI-740680">
        <id>Q8WWB3</id>
        <label>DYDC1</label>
    </interactant>
    <organismsDiffer>false</organismsDiffer>
    <experiments>3</experiments>
</comment>
<comment type="interaction">
    <interactant intactId="EBI-2559305">
        <id>A5D8V6</id>
    </interactant>
    <interactant intactId="EBI-12807776">
        <id>O00167-2</id>
        <label>EYA2</label>
    </interactant>
    <organismsDiffer>false</organismsDiffer>
    <experiments>3</experiments>
</comment>
<comment type="interaction">
    <interactant intactId="EBI-2559305">
        <id>A5D8V6</id>
    </interactant>
    <interactant intactId="EBI-7957930">
        <id>Q92567</id>
        <label>FAM168A</label>
    </interactant>
    <organismsDiffer>false</organismsDiffer>
    <experiments>3</experiments>
</comment>
<comment type="interaction">
    <interactant intactId="EBI-2559305">
        <id>A5D8V6</id>
    </interactant>
    <interactant intactId="EBI-12193763">
        <id>A1KXE4-2</id>
        <label>FAM168B</label>
    </interactant>
    <organismsDiffer>false</organismsDiffer>
    <experiments>3</experiments>
</comment>
<comment type="interaction">
    <interactant intactId="EBI-2559305">
        <id>A5D8V6</id>
    </interactant>
    <interactant intactId="EBI-10220102">
        <id>B7ZLH0</id>
        <label>FAM22F</label>
    </interactant>
    <organismsDiffer>false</organismsDiffer>
    <experiments>3</experiments>
</comment>
<comment type="interaction">
    <interactant intactId="EBI-2559305">
        <id>A5D8V6</id>
    </interactant>
    <interactant intactId="EBI-11958845">
        <id>O94868-3</id>
        <label>FCHSD2</label>
    </interactant>
    <organismsDiffer>false</organismsDiffer>
    <experiments>3</experiments>
</comment>
<comment type="interaction">
    <interactant intactId="EBI-2559305">
        <id>A5D8V6</id>
    </interactant>
    <interactant intactId="EBI-12018822">
        <id>Q12951-2</id>
        <label>FOXI1</label>
    </interactant>
    <organismsDiffer>false</organismsDiffer>
    <experiments>6</experiments>
</comment>
<comment type="interaction">
    <interactant intactId="EBI-2559305">
        <id>A5D8V6</id>
    </interactant>
    <interactant intactId="EBI-12121668">
        <id>Q96AE4-2</id>
        <label>FUBP1</label>
    </interactant>
    <organismsDiffer>false</organismsDiffer>
    <experiments>3</experiments>
</comment>
<comment type="interaction">
    <interactant intactId="EBI-2559305">
        <id>A5D8V6</id>
    </interactant>
    <interactant intactId="EBI-618309">
        <id>Q08379</id>
        <label>GOLGA2</label>
    </interactant>
    <organismsDiffer>false</organismsDiffer>
    <experiments>3</experiments>
</comment>
<comment type="interaction">
    <interactant intactId="EBI-2559305">
        <id>A5D8V6</id>
    </interactant>
    <interactant intactId="EBI-713355">
        <id>Q13227</id>
        <label>GPS2</label>
    </interactant>
    <organismsDiffer>false</organismsDiffer>
    <experiments>3</experiments>
</comment>
<comment type="interaction">
    <interactant intactId="EBI-2559305">
        <id>A5D8V6</id>
    </interactant>
    <interactant intactId="EBI-401755">
        <id>P62993</id>
        <label>GRB2</label>
    </interactant>
    <organismsDiffer>false</organismsDiffer>
    <experiments>3</experiments>
</comment>
<comment type="interaction">
    <interactant intactId="EBI-2559305">
        <id>A5D8V6</id>
    </interactant>
    <interactant intactId="EBI-2514791">
        <id>Q96CS2</id>
        <label>HAUS1</label>
    </interactant>
    <organismsDiffer>false</organismsDiffer>
    <experiments>3</experiments>
</comment>
<comment type="interaction">
    <interactant intactId="EBI-2559305">
        <id>A5D8V6</id>
    </interactant>
    <interactant intactId="EBI-12057631">
        <id>A0A087WSW0</id>
        <label>HELT</label>
    </interactant>
    <organismsDiffer>false</organismsDiffer>
    <experiments>3</experiments>
</comment>
<comment type="interaction">
    <interactant intactId="EBI-2559305">
        <id>A5D8V6</id>
    </interactant>
    <interactant intactId="EBI-740220">
        <id>O14964</id>
        <label>HGS</label>
    </interactant>
    <organismsDiffer>false</organismsDiffer>
    <experiments>3</experiments>
</comment>
<comment type="interaction">
    <interactant intactId="EBI-2559305">
        <id>A5D8V6</id>
    </interactant>
    <interactant intactId="EBI-352986">
        <id>P52597</id>
        <label>HNRNPF</label>
    </interactant>
    <organismsDiffer>false</organismsDiffer>
    <experiments>3</experiments>
</comment>
<comment type="interaction">
    <interactant intactId="EBI-2559305">
        <id>A5D8V6</id>
    </interactant>
    <interactant intactId="EBI-1018153">
        <id>Q9BUJ2</id>
        <label>HNRNPUL1</label>
    </interactant>
    <organismsDiffer>false</organismsDiffer>
    <experiments>3</experiments>
</comment>
<comment type="interaction">
    <interactant intactId="EBI-2559305">
        <id>A5D8V6</id>
    </interactant>
    <interactant intactId="EBI-12904528">
        <id>Q12906-6</id>
        <label>ILF3</label>
    </interactant>
    <organismsDiffer>false</organismsDiffer>
    <experiments>3</experiments>
</comment>
<comment type="interaction">
    <interactant intactId="EBI-2559305">
        <id>A5D8V6</id>
    </interactant>
    <interactant intactId="EBI-8284732">
        <id>Q13351</id>
        <label>KLF1</label>
    </interactant>
    <organismsDiffer>false</organismsDiffer>
    <experiments>3</experiments>
</comment>
<comment type="interaction">
    <interactant intactId="EBI-2559305">
        <id>A5D8V6</id>
    </interactant>
    <interactant intactId="EBI-3044087">
        <id>Q7Z3Y8</id>
        <label>KRT27</label>
    </interactant>
    <organismsDiffer>false</organismsDiffer>
    <experiments>3</experiments>
</comment>
<comment type="interaction">
    <interactant intactId="EBI-2559305">
        <id>A5D8V6</id>
    </interactant>
    <interactant intactId="EBI-1049638">
        <id>Q14525</id>
        <label>KRT33B</label>
    </interactant>
    <organismsDiffer>false</organismsDiffer>
    <experiments>3</experiments>
</comment>
<comment type="interaction">
    <interactant intactId="EBI-2559305">
        <id>A5D8V6</id>
    </interactant>
    <interactant intactId="EBI-11992140">
        <id>Q3LI76</id>
        <label>KRTAP15-1</label>
    </interactant>
    <organismsDiffer>false</organismsDiffer>
    <experiments>3</experiments>
</comment>
<comment type="interaction">
    <interactant intactId="EBI-2559305">
        <id>A5D8V6</id>
    </interactant>
    <interactant intactId="EBI-1048945">
        <id>Q3LI72</id>
        <label>KRTAP19-5</label>
    </interactant>
    <organismsDiffer>false</organismsDiffer>
    <experiments>3</experiments>
</comment>
<comment type="interaction">
    <interactant intactId="EBI-2559305">
        <id>A5D8V6</id>
    </interactant>
    <interactant intactId="EBI-12805508">
        <id>Q3LI70</id>
        <label>KRTAP19-6</label>
    </interactant>
    <organismsDiffer>false</organismsDiffer>
    <experiments>3</experiments>
</comment>
<comment type="interaction">
    <interactant intactId="EBI-2559305">
        <id>A5D8V6</id>
    </interactant>
    <interactant intactId="EBI-10241353">
        <id>Q3SYF9</id>
        <label>KRTAP19-7</label>
    </interactant>
    <organismsDiffer>false</organismsDiffer>
    <experiments>3</experiments>
</comment>
<comment type="interaction">
    <interactant intactId="EBI-2559305">
        <id>A5D8V6</id>
    </interactant>
    <interactant intactId="EBI-12111050">
        <id>Q3LI64</id>
        <label>KRTAP6-1</label>
    </interactant>
    <organismsDiffer>false</organismsDiffer>
    <experiments>3</experiments>
</comment>
<comment type="interaction">
    <interactant intactId="EBI-2559305">
        <id>A5D8V6</id>
    </interactant>
    <interactant intactId="EBI-11962084">
        <id>Q3LI66</id>
        <label>KRTAP6-2</label>
    </interactant>
    <organismsDiffer>false</organismsDiffer>
    <experiments>5</experiments>
</comment>
<comment type="interaction">
    <interactant intactId="EBI-2559305">
        <id>A5D8V6</id>
    </interactant>
    <interactant intactId="EBI-18394498">
        <id>Q8IUC3</id>
        <label>KRTAP7-1</label>
    </interactant>
    <organismsDiffer>false</organismsDiffer>
    <experiments>3</experiments>
</comment>
<comment type="interaction">
    <interactant intactId="EBI-2559305">
        <id>A5D8V6</id>
    </interactant>
    <interactant intactId="EBI-1052105">
        <id>Q14657</id>
        <label>LAGE3</label>
    </interactant>
    <organismsDiffer>false</organismsDiffer>
    <experiments>3</experiments>
</comment>
<comment type="interaction">
    <interactant intactId="EBI-2559305">
        <id>A5D8V6</id>
    </interactant>
    <interactant intactId="EBI-9088686">
        <id>Q14847-2</id>
        <label>LASP1</label>
    </interactant>
    <organismsDiffer>false</organismsDiffer>
    <experiments>3</experiments>
</comment>
<comment type="interaction">
    <interactant intactId="EBI-2559305">
        <id>A5D8V6</id>
    </interactant>
    <interactant intactId="EBI-741424">
        <id>Q8NDC0</id>
        <label>MAPK1IP1L</label>
    </interactant>
    <organismsDiffer>false</organismsDiffer>
    <experiments>6</experiments>
</comment>
<comment type="interaction">
    <interactant intactId="EBI-2559305">
        <id>A5D8V6</id>
    </interactant>
    <interactant intactId="EBI-8487781">
        <id>Q8N6F8</id>
        <label>METTL27</label>
    </interactant>
    <organismsDiffer>false</organismsDiffer>
    <experiments>3</experiments>
</comment>
<comment type="interaction">
    <interactant intactId="EBI-2559305">
        <id>A5D8V6</id>
    </interactant>
    <interactant intactId="EBI-741158">
        <id>Q96HA8</id>
        <label>NTAQ1</label>
    </interactant>
    <organismsDiffer>false</organismsDiffer>
    <experiments>6</experiments>
</comment>
<comment type="interaction">
    <interactant intactId="EBI-2559305">
        <id>A5D8V6</id>
    </interactant>
    <interactant intactId="EBI-741048">
        <id>Q7Z3B4</id>
        <label>NUP54</label>
    </interactant>
    <organismsDiffer>false</organismsDiffer>
    <experiments>3</experiments>
</comment>
<comment type="interaction">
    <interactant intactId="EBI-2559305">
        <id>A5D8V6</id>
    </interactant>
    <interactant intactId="EBI-10181968">
        <id>Q7Z4N8</id>
        <label>P4HA3</label>
    </interactant>
    <organismsDiffer>false</organismsDiffer>
    <experiments>3</experiments>
</comment>
<comment type="interaction">
    <interactant intactId="EBI-2559305">
        <id>A5D8V6</id>
    </interactant>
    <interactant intactId="EBI-12111000">
        <id>P55771</id>
        <label>PAX9</label>
    </interactant>
    <organismsDiffer>false</organismsDiffer>
    <experiments>3</experiments>
</comment>
<comment type="interaction">
    <interactant intactId="EBI-2559305">
        <id>A5D8V6</id>
    </interactant>
    <interactant intactId="EBI-352915">
        <id>O75340</id>
        <label>PDCD6</label>
    </interactant>
    <organismsDiffer>false</organismsDiffer>
    <experiments>6</experiments>
</comment>
<comment type="interaction">
    <interactant intactId="EBI-2559305">
        <id>A5D8V6</id>
    </interactant>
    <interactant intactId="EBI-724639">
        <id>Q9UBV8</id>
        <label>PEF1</label>
    </interactant>
    <organismsDiffer>false</organismsDiffer>
    <experiments>3</experiments>
</comment>
<comment type="interaction">
    <interactant intactId="EBI-2559305">
        <id>A5D8V6</id>
    </interactant>
    <interactant intactId="EBI-1373569">
        <id>P55347</id>
        <label>PKNOX1</label>
    </interactant>
    <organismsDiffer>false</organismsDiffer>
    <experiments>4</experiments>
</comment>
<comment type="interaction">
    <interactant intactId="EBI-2559305">
        <id>A5D8V6</id>
    </interactant>
    <interactant intactId="EBI-10173774">
        <id>Q96I87</id>
        <label>PKNOX1</label>
    </interactant>
    <organismsDiffer>false</organismsDiffer>
    <experiments>3</experiments>
</comment>
<comment type="interaction">
    <interactant intactId="EBI-2559305">
        <id>A5D8V6</id>
    </interactant>
    <interactant intactId="EBI-2692890">
        <id>Q96KN3</id>
        <label>PKNOX2</label>
    </interactant>
    <organismsDiffer>false</organismsDiffer>
    <experiments>5</experiments>
</comment>
<comment type="interaction">
    <interactant intactId="EBI-2559305">
        <id>A5D8V6</id>
    </interactant>
    <interactant intactId="EBI-726466">
        <id>O15496</id>
        <label>PLA2G10</label>
    </interactant>
    <organismsDiffer>false</organismsDiffer>
    <experiments>3</experiments>
</comment>
<comment type="interaction">
    <interactant intactId="EBI-2559305">
        <id>A5D8V6</id>
    </interactant>
    <interactant intactId="EBI-949255">
        <id>Q58EX7</id>
        <label>PLEKHG4</label>
    </interactant>
    <organismsDiffer>false</organismsDiffer>
    <experiments>3</experiments>
</comment>
<comment type="interaction">
    <interactant intactId="EBI-2559305">
        <id>A5D8V6</id>
    </interactant>
    <interactant intactId="EBI-740019">
        <id>O15162</id>
        <label>PLSCR1</label>
    </interactant>
    <organismsDiffer>false</organismsDiffer>
    <experiments>3</experiments>
</comment>
<comment type="interaction">
    <interactant intactId="EBI-2559305">
        <id>A5D8V6</id>
    </interactant>
    <interactant intactId="EBI-394753">
        <id>P52435</id>
        <label>POLR2J</label>
    </interactant>
    <organismsDiffer>false</organismsDiffer>
    <experiments>3</experiments>
</comment>
<comment type="interaction">
    <interactant intactId="EBI-2559305">
        <id>A5D8V6</id>
    </interactant>
    <interactant intactId="EBI-12818681">
        <id>Q9H1A7</id>
        <label>POLR2J3</label>
    </interactant>
    <organismsDiffer>false</organismsDiffer>
    <experiments>3</experiments>
</comment>
<comment type="interaction">
    <interactant intactId="EBI-2559305">
        <id>A5D8V6</id>
    </interactant>
    <interactant intactId="EBI-943588">
        <id>Q16633</id>
        <label>POU2AF1</label>
    </interactant>
    <organismsDiffer>false</organismsDiffer>
    <experiments>3</experiments>
</comment>
<comment type="interaction">
    <interactant intactId="EBI-2559305">
        <id>A5D8V6</id>
    </interactant>
    <interactant intactId="EBI-12754095">
        <id>P86480</id>
        <label>PRR20D</label>
    </interactant>
    <organismsDiffer>false</organismsDiffer>
    <experiments>3</experiments>
</comment>
<comment type="interaction">
    <interactant intactId="EBI-2559305">
        <id>A5D8V6</id>
    </interactant>
    <interactant intactId="EBI-348380">
        <id>P25788</id>
        <label>PSMA3</label>
    </interactant>
    <organismsDiffer>false</organismsDiffer>
    <experiments>3</experiments>
</comment>
<comment type="interaction">
    <interactant intactId="EBI-2559305">
        <id>A5D8V6</id>
    </interactant>
    <interactant intactId="EBI-744023">
        <id>Q9BTL3</id>
        <label>RAMAC</label>
    </interactant>
    <organismsDiffer>false</organismsDiffer>
    <experiments>3</experiments>
</comment>
<comment type="interaction">
    <interactant intactId="EBI-2559305">
        <id>A5D8V6</id>
    </interactant>
    <interactant intactId="EBI-740322">
        <id>Q93062</id>
        <label>RBPMS</label>
    </interactant>
    <organismsDiffer>false</organismsDiffer>
    <experiments>3</experiments>
</comment>
<comment type="interaction">
    <interactant intactId="EBI-2559305">
        <id>A5D8V6</id>
    </interactant>
    <interactant intactId="EBI-740343">
        <id>Q93062-3</id>
        <label>RBPMS</label>
    </interactant>
    <organismsDiffer>false</organismsDiffer>
    <experiments>3</experiments>
</comment>
<comment type="interaction">
    <interactant intactId="EBI-2559305">
        <id>A5D8V6</id>
    </interactant>
    <interactant intactId="EBI-11987469">
        <id>Q6ZRY4</id>
        <label>RBPMS2</label>
    </interactant>
    <organismsDiffer>false</organismsDiffer>
    <experiments>3</experiments>
</comment>
<comment type="interaction">
    <interactant intactId="EBI-2559305">
        <id>A5D8V6</id>
    </interactant>
    <interactant intactId="EBI-746118">
        <id>Q8HWS3</id>
        <label>RFX6</label>
    </interactant>
    <organismsDiffer>false</organismsDiffer>
    <experiments>3</experiments>
</comment>
<comment type="interaction">
    <interactant intactId="EBI-2559305">
        <id>A5D8V6</id>
    </interactant>
    <interactant intactId="EBI-10265323">
        <id>Q8N443</id>
        <label>RIBC1</label>
    </interactant>
    <organismsDiffer>false</organismsDiffer>
    <experiments>6</experiments>
</comment>
<comment type="interaction">
    <interactant intactId="EBI-2559305">
        <id>A5D8V6</id>
    </interactant>
    <interactant intactId="EBI-726876">
        <id>Q6NUQ1</id>
        <label>RINT1</label>
    </interactant>
    <organismsDiffer>false</organismsDiffer>
    <experiments>3</experiments>
</comment>
<comment type="interaction">
    <interactant intactId="EBI-2559305">
        <id>A5D8V6</id>
    </interactant>
    <interactant intactId="EBI-747925">
        <id>Q9NQG5</id>
        <label>RPRD1B</label>
    </interactant>
    <organismsDiffer>false</organismsDiffer>
    <experiments>3</experiments>
</comment>
<comment type="interaction">
    <interactant intactId="EBI-2559305">
        <id>A5D8V6</id>
    </interactant>
    <interactant intactId="EBI-12001422">
        <id>Q01196-8</id>
        <label>RUNX1</label>
    </interactant>
    <organismsDiffer>false</organismsDiffer>
    <experiments>3</experiments>
</comment>
<comment type="interaction">
    <interactant intactId="EBI-2559305">
        <id>A5D8V6</id>
    </interactant>
    <interactant intactId="EBI-10173690">
        <id>Q6FGM0</id>
        <label>SH3GL1</label>
    </interactant>
    <organismsDiffer>false</organismsDiffer>
    <experiments>3</experiments>
</comment>
<comment type="interaction">
    <interactant intactId="EBI-2559305">
        <id>A5D8V6</id>
    </interactant>
    <interactant intactId="EBI-697911">
        <id>Q99961</id>
        <label>SH3GL1</label>
    </interactant>
    <organismsDiffer>false</organismsDiffer>
    <experiments>3</experiments>
</comment>
<comment type="interaction">
    <interactant intactId="EBI-2559305">
        <id>A5D8V6</id>
    </interactant>
    <interactant intactId="EBI-2130111">
        <id>Q8TEC5</id>
        <label>SH3RF2</label>
    </interactant>
    <organismsDiffer>false</organismsDiffer>
    <experiments>3</experiments>
</comment>
<comment type="interaction">
    <interactant intactId="EBI-2559305">
        <id>A5D8V6</id>
    </interactant>
    <interactant intactId="EBI-311323">
        <id>O94875</id>
        <label>SORBS2</label>
    </interactant>
    <organismsDiffer>false</organismsDiffer>
    <experiments>3</experiments>
</comment>
<comment type="interaction">
    <interactant intactId="EBI-2559305">
        <id>A5D8V6</id>
    </interactant>
    <interactant intactId="EBI-12037893">
        <id>O94875-10</id>
        <label>SORBS2</label>
    </interactant>
    <organismsDiffer>false</organismsDiffer>
    <experiments>3</experiments>
</comment>
<comment type="interaction">
    <interactant intactId="EBI-2559305">
        <id>A5D8V6</id>
    </interactant>
    <interactant intactId="EBI-741237">
        <id>O60504</id>
        <label>SORBS3</label>
    </interactant>
    <organismsDiffer>false</organismsDiffer>
    <experiments>6</experiments>
</comment>
<comment type="interaction">
    <interactant intactId="EBI-2559305">
        <id>A5D8V6</id>
    </interactant>
    <interactant intactId="EBI-11959123">
        <id>Q99932-2</id>
        <label>SPAG8</label>
    </interactant>
    <organismsDiffer>false</organismsDiffer>
    <experiments>3</experiments>
</comment>
<comment type="interaction">
    <interactant intactId="EBI-2559305">
        <id>A5D8V6</id>
    </interactant>
    <interactant intactId="EBI-373258">
        <id>O75886</id>
        <label>STAM2</label>
    </interactant>
    <organismsDiffer>false</organismsDiffer>
    <experiments>6</experiments>
</comment>
<comment type="interaction">
    <interactant intactId="EBI-2559305">
        <id>A5D8V6</id>
    </interactant>
    <interactant intactId="EBI-12843506">
        <id>Q8IWL8</id>
        <label>STH</label>
    </interactant>
    <organismsDiffer>false</organismsDiffer>
    <experiments>3</experiments>
</comment>
<comment type="interaction">
    <interactant intactId="EBI-2559305">
        <id>A5D8V6</id>
    </interactant>
    <interactant intactId="EBI-2554984">
        <id>Q9Y6A5</id>
        <label>TACC3</label>
    </interactant>
    <organismsDiffer>false</organismsDiffer>
    <experiments>3</experiments>
</comment>
<comment type="interaction">
    <interactant intactId="EBI-2559305">
        <id>A5D8V6</id>
    </interactant>
    <interactant intactId="EBI-11952651">
        <id>Q7Z6R9</id>
        <label>TFAP2D</label>
    </interactant>
    <organismsDiffer>false</organismsDiffer>
    <experiments>3</experiments>
</comment>
<comment type="interaction">
    <interactant intactId="EBI-2559305">
        <id>A5D8V6</id>
    </interactant>
    <interactant intactId="EBI-357061">
        <id>Q92734</id>
        <label>TFG</label>
    </interactant>
    <organismsDiffer>false</organismsDiffer>
    <experiments>6</experiments>
</comment>
<comment type="interaction">
    <interactant intactId="EBI-2559305">
        <id>A5D8V6</id>
    </interactant>
    <interactant intactId="EBI-1105213">
        <id>Q9UBB9</id>
        <label>TFIP11</label>
    </interactant>
    <organismsDiffer>false</organismsDiffer>
    <experiments>3</experiments>
</comment>
<comment type="interaction">
    <interactant intactId="EBI-2559305">
        <id>A5D8V6</id>
    </interactant>
    <interactant intactId="EBI-11064654">
        <id>Q01085-2</id>
        <label>TIAL1</label>
    </interactant>
    <organismsDiffer>false</organismsDiffer>
    <experiments>3</experiments>
</comment>
<comment type="interaction">
    <interactant intactId="EBI-2559305">
        <id>A5D8V6</id>
    </interactant>
    <interactant intactId="EBI-717810">
        <id>Q08117</id>
        <label>TLE5</label>
    </interactant>
    <organismsDiffer>false</organismsDiffer>
    <experiments>3</experiments>
</comment>
<comment type="interaction">
    <interactant intactId="EBI-2559305">
        <id>A5D8V6</id>
    </interactant>
    <interactant intactId="EBI-11741437">
        <id>Q08117-2</id>
        <label>TLE5</label>
    </interactant>
    <organismsDiffer>false</organismsDiffer>
    <experiments>3</experiments>
</comment>
<comment type="interaction">
    <interactant intactId="EBI-2559305">
        <id>A5D8V6</id>
    </interactant>
    <interactant intactId="EBI-12806590">
        <id>Q86WV8</id>
        <label>TSC1</label>
    </interactant>
    <organismsDiffer>false</organismsDiffer>
    <experiments>3</experiments>
</comment>
<comment type="interaction">
    <interactant intactId="EBI-2559305">
        <id>A5D8V6</id>
    </interactant>
    <interactant intactId="EBI-346882">
        <id>Q99816</id>
        <label>TSG101</label>
    </interactant>
    <organismsDiffer>false</organismsDiffer>
    <experiments>7</experiments>
</comment>
<comment type="interaction">
    <interactant intactId="EBI-2559305">
        <id>A5D8V6</id>
    </interactant>
    <interactant intactId="EBI-2514383">
        <id>Q5T6F2</id>
        <label>UBAP2</label>
    </interactant>
    <organismsDiffer>false</organismsDiffer>
    <experiments>3</experiments>
</comment>
<comment type="interaction">
    <interactant intactId="EBI-2559305">
        <id>A5D8V6</id>
    </interactant>
    <interactant intactId="EBI-12068150">
        <id>Q6NVU6</id>
        <label>UFSP1</label>
    </interactant>
    <organismsDiffer>false</organismsDiffer>
    <experiments>3</experiments>
</comment>
<comment type="interaction">
    <interactant intactId="EBI-2559305">
        <id>A5D8V6</id>
    </interactant>
    <interactant intactId="EBI-12040603">
        <id>Q9NZC7-5</id>
        <label>WWOX</label>
    </interactant>
    <organismsDiffer>false</organismsDiffer>
    <experiments>3</experiments>
</comment>
<comment type="interaction">
    <interactant intactId="EBI-2559305">
        <id>A5D8V6</id>
    </interactant>
    <interactant intactId="EBI-743923">
        <id>O00308</id>
        <label>WWP2</label>
    </interactant>
    <organismsDiffer>false</organismsDiffer>
    <experiments>6</experiments>
</comment>
<comment type="interaction">
    <interactant intactId="EBI-2559305">
        <id>A5D8V6</id>
    </interactant>
    <interactant intactId="EBI-517127">
        <id>P98170</id>
        <label>XIAP</label>
    </interactant>
    <organismsDiffer>false</organismsDiffer>
    <experiments>7</experiments>
</comment>
<comment type="interaction">
    <interactant intactId="EBI-2559305">
        <id>A5D8V6</id>
    </interactant>
    <interactant intactId="EBI-1051237">
        <id>Q9BYJ9</id>
        <label>YTHDF1</label>
    </interactant>
    <organismsDiffer>false</organismsDiffer>
    <experiments>3</experiments>
</comment>
<comment type="interaction">
    <interactant intactId="EBI-2559305">
        <id>A5D8V6</id>
    </interactant>
    <interactant intactId="EBI-7850213">
        <id>Q9UDW3</id>
        <label>ZMAT5</label>
    </interactant>
    <organismsDiffer>false</organismsDiffer>
    <experiments>3</experiments>
</comment>
<comment type="interaction">
    <interactant intactId="EBI-2559305">
        <id>A5D8V6</id>
    </interactant>
    <interactant intactId="EBI-12030590">
        <id>Q9H0C1</id>
        <label>ZMYND12</label>
    </interactant>
    <organismsDiffer>false</organismsDiffer>
    <experiments>3</experiments>
</comment>
<comment type="interaction">
    <interactant intactId="EBI-2559305">
        <id>A5D8V6</id>
    </interactant>
    <interactant intactId="EBI-10177989">
        <id>G4XUV3</id>
    </interactant>
    <organismsDiffer>false</organismsDiffer>
    <experiments>3</experiments>
</comment>
<comment type="subcellular location">
    <subcellularLocation>
        <location evidence="13">Late endosome membrane</location>
        <topology evidence="13">Peripheral membrane protein</topology>
    </subcellularLocation>
    <text>Probably associates with membranes. Recruited to the plasma membrane by HIV-1.</text>
</comment>
<comment type="PTM">
    <text evidence="9">Phosphorylated by TBK1.</text>
</comment>
<comment type="similarity">
    <text evidence="12">Belongs to the VPS37 family.</text>
</comment>
<comment type="sequence caution" evidence="12">
    <conflict type="erroneous initiation">
        <sequence resource="EMBL-CDS" id="CAD38936"/>
    </conflict>
    <text>Extended N-terminus.</text>
</comment>
<accession>A5D8V6</accession>
<accession>Q8N3K4</accession>
<protein>
    <recommendedName>
        <fullName>Vacuolar protein sorting-associated protein 37C</fullName>
        <shortName>hVps37C</shortName>
    </recommendedName>
    <alternativeName>
        <fullName>ESCRT-I complex subunit VPS37C</fullName>
    </alternativeName>
</protein>
<feature type="chain" id="PRO_0000312198" description="Vacuolar protein sorting-associated protein 37C">
    <location>
        <begin position="1"/>
        <end position="355"/>
    </location>
</feature>
<feature type="domain" description="VPS37 C-terminal" evidence="2">
    <location>
        <begin position="78"/>
        <end position="167"/>
    </location>
</feature>
<feature type="region of interest" description="Disordered" evidence="3">
    <location>
        <begin position="159"/>
        <end position="355"/>
    </location>
</feature>
<feature type="compositionally biased region" description="Pro residues" evidence="3">
    <location>
        <begin position="170"/>
        <end position="186"/>
    </location>
</feature>
<feature type="compositionally biased region" description="Pro residues" evidence="3">
    <location>
        <begin position="194"/>
        <end position="214"/>
    </location>
</feature>
<feature type="compositionally biased region" description="Low complexity" evidence="3">
    <location>
        <begin position="291"/>
        <end position="304"/>
    </location>
</feature>
<feature type="compositionally biased region" description="Pro residues" evidence="3">
    <location>
        <begin position="321"/>
        <end position="355"/>
    </location>
</feature>
<feature type="modified residue" description="Phosphoserine" evidence="1">
    <location>
        <position position="29"/>
    </location>
</feature>
<feature type="sequence variant" id="VAR_037451" description="In dbSNP:rs2232142." evidence="7">
    <original>V</original>
    <variation>D</variation>
    <location>
        <position position="182"/>
    </location>
</feature>
<feature type="sequence variant" id="VAR_037452" description="In dbSNP:rs754382." evidence="4 11">
    <original>L</original>
    <variation>S</variation>
    <location>
        <position position="198"/>
    </location>
</feature>
<reference key="1">
    <citation type="journal article" date="2007" name="BMC Genomics">
        <title>The full-ORF clone resource of the German cDNA consortium.</title>
        <authorList>
            <person name="Bechtel S."/>
            <person name="Rosenfelder H."/>
            <person name="Duda A."/>
            <person name="Schmidt C.P."/>
            <person name="Ernst U."/>
            <person name="Wellenreuther R."/>
            <person name="Mehrle A."/>
            <person name="Schuster C."/>
            <person name="Bahr A."/>
            <person name="Bloecker H."/>
            <person name="Heubner D."/>
            <person name="Hoerlein A."/>
            <person name="Michel G."/>
            <person name="Wedler H."/>
            <person name="Koehrer K."/>
            <person name="Ottenwaelder B."/>
            <person name="Poustka A."/>
            <person name="Wiemann S."/>
            <person name="Schupp I."/>
        </authorList>
    </citation>
    <scope>NUCLEOTIDE SEQUENCE [LARGE SCALE MRNA]</scope>
    <scope>VARIANT ASP-182</scope>
    <source>
        <tissue>Amygdala</tissue>
    </source>
</reference>
<reference key="2">
    <citation type="journal article" date="2006" name="Nature">
        <title>Human chromosome 11 DNA sequence and analysis including novel gene identification.</title>
        <authorList>
            <person name="Taylor T.D."/>
            <person name="Noguchi H."/>
            <person name="Totoki Y."/>
            <person name="Toyoda A."/>
            <person name="Kuroki Y."/>
            <person name="Dewar K."/>
            <person name="Lloyd C."/>
            <person name="Itoh T."/>
            <person name="Takeda T."/>
            <person name="Kim D.-W."/>
            <person name="She X."/>
            <person name="Barlow K.F."/>
            <person name="Bloom T."/>
            <person name="Bruford E."/>
            <person name="Chang J.L."/>
            <person name="Cuomo C.A."/>
            <person name="Eichler E."/>
            <person name="FitzGerald M.G."/>
            <person name="Jaffe D.B."/>
            <person name="LaButti K."/>
            <person name="Nicol R."/>
            <person name="Park H.-S."/>
            <person name="Seaman C."/>
            <person name="Sougnez C."/>
            <person name="Yang X."/>
            <person name="Zimmer A.R."/>
            <person name="Zody M.C."/>
            <person name="Birren B.W."/>
            <person name="Nusbaum C."/>
            <person name="Fujiyama A."/>
            <person name="Hattori M."/>
            <person name="Rogers J."/>
            <person name="Lander E.S."/>
            <person name="Sakaki Y."/>
        </authorList>
    </citation>
    <scope>NUCLEOTIDE SEQUENCE [LARGE SCALE GENOMIC DNA]</scope>
</reference>
<reference key="3">
    <citation type="submission" date="2005-07" db="EMBL/GenBank/DDBJ databases">
        <authorList>
            <person name="Mural R.J."/>
            <person name="Istrail S."/>
            <person name="Sutton G.G."/>
            <person name="Florea L."/>
            <person name="Halpern A.L."/>
            <person name="Mobarry C.M."/>
            <person name="Lippert R."/>
            <person name="Walenz B."/>
            <person name="Shatkay H."/>
            <person name="Dew I."/>
            <person name="Miller J.R."/>
            <person name="Flanigan M.J."/>
            <person name="Edwards N.J."/>
            <person name="Bolanos R."/>
            <person name="Fasulo D."/>
            <person name="Halldorsson B.V."/>
            <person name="Hannenhalli S."/>
            <person name="Turner R."/>
            <person name="Yooseph S."/>
            <person name="Lu F."/>
            <person name="Nusskern D.R."/>
            <person name="Shue B.C."/>
            <person name="Zheng X.H."/>
            <person name="Zhong F."/>
            <person name="Delcher A.L."/>
            <person name="Huson D.H."/>
            <person name="Kravitz S.A."/>
            <person name="Mouchard L."/>
            <person name="Reinert K."/>
            <person name="Remington K.A."/>
            <person name="Clark A.G."/>
            <person name="Waterman M.S."/>
            <person name="Eichler E.E."/>
            <person name="Adams M.D."/>
            <person name="Hunkapiller M.W."/>
            <person name="Myers E.W."/>
            <person name="Venter J.C."/>
        </authorList>
    </citation>
    <scope>NUCLEOTIDE SEQUENCE [LARGE SCALE GENOMIC DNA]</scope>
    <scope>VARIANT SER-198</scope>
</reference>
<reference key="4">
    <citation type="journal article" date="2004" name="Genome Res.">
        <title>The status, quality, and expansion of the NIH full-length cDNA project: the Mammalian Gene Collection (MGC).</title>
        <authorList>
            <consortium name="The MGC Project Team"/>
        </authorList>
    </citation>
    <scope>NUCLEOTIDE SEQUENCE [LARGE SCALE MRNA]</scope>
    <scope>VARIANT SER-198</scope>
</reference>
<reference key="5">
    <citation type="journal article" date="2005" name="J. Biol. Chem.">
        <title>Identification of human VPS37C, a component of endosomal sorting complex required for transport-I important for viral budding.</title>
        <authorList>
            <person name="Eastman S.W."/>
            <person name="Martin-Serrano J."/>
            <person name="Chung W."/>
            <person name="Zang T."/>
            <person name="Bieniasz P.D."/>
        </authorList>
    </citation>
    <scope>FUNCTION</scope>
    <scope>INTERACTION WITH HGS; STAM2 AND TSG101</scope>
    <scope>SUBCELLULAR LOCATION</scope>
</reference>
<reference key="6">
    <citation type="journal article" date="2007" name="Cell Host Microbe">
        <title>Identification of human MVB12 proteins as ESCRT-I subunits that function in HIV budding.</title>
        <authorList>
            <person name="Morita E."/>
            <person name="Sandrin V."/>
            <person name="Alam S.L."/>
            <person name="Eckert D.M."/>
            <person name="Gygi S.P."/>
            <person name="Sundquist W.I."/>
        </authorList>
    </citation>
    <scope>INTERACTION WITH TSG101; VPS28; MVB12A AND MVB12B</scope>
    <scope>IDENTIFICATION BY MASS SPECTROMETRY</scope>
</reference>
<reference key="7">
    <citation type="journal article" date="2007" name="EMBO J.">
        <title>Human ESCRT and ALIX proteins interact with proteins of the midbody and function in cytokinesis.</title>
        <authorList>
            <person name="Morita E."/>
            <person name="Sandrin V."/>
            <person name="Chung H.Y."/>
            <person name="Morham S.G."/>
            <person name="Gygi S.P."/>
            <person name="Rodesch C.K."/>
            <person name="Sundquist W.I."/>
        </authorList>
    </citation>
    <scope>INTERACTION WITH CEP55</scope>
</reference>
<reference key="8">
    <citation type="journal article" date="2011" name="BMC Syst. Biol.">
        <title>Initial characterization of the human central proteome.</title>
        <authorList>
            <person name="Burkard T.R."/>
            <person name="Planyavsky M."/>
            <person name="Kaupe I."/>
            <person name="Breitwieser F.P."/>
            <person name="Buerckstuemmer T."/>
            <person name="Bennett K.L."/>
            <person name="Superti-Furga G."/>
            <person name="Colinge J."/>
        </authorList>
    </citation>
    <scope>IDENTIFICATION BY MASS SPECTROMETRY [LARGE SCALE ANALYSIS]</scope>
</reference>
<reference key="9">
    <citation type="journal article" date="2011" name="J. Immunol.">
        <title>TANK-binding kinase 1 attenuates PTAP-dependent retroviral budding through targeting endosomal sorting complex required for transport-I.</title>
        <authorList>
            <person name="Da Q."/>
            <person name="Yang X."/>
            <person name="Xu Y."/>
            <person name="Gao G."/>
            <person name="Cheng G."/>
            <person name="Tang H."/>
        </authorList>
    </citation>
    <scope>PHOSPHORYLATION BY TBK1</scope>
</reference>
<reference key="10">
    <citation type="journal article" date="2012" name="Structure">
        <title>The UBAP1 subunit of ESCRT-I interacts with ubiquitin via a SOUBA domain.</title>
        <authorList>
            <person name="Agromayor M."/>
            <person name="Soler N."/>
            <person name="Caballe A."/>
            <person name="Kueck T."/>
            <person name="Freund S.M."/>
            <person name="Allen M.D."/>
            <person name="Bycroft M."/>
            <person name="Perisic O."/>
            <person name="Ye Y."/>
            <person name="McDonald B."/>
            <person name="Scheel H."/>
            <person name="Hofmann K."/>
            <person name="Neil S.J."/>
            <person name="Martin-Serrano J."/>
            <person name="Williams R.L."/>
        </authorList>
    </citation>
    <scope>IDENTIFICATION IN AN ESCRT-I COMPLEX WITH UBAP1</scope>
    <scope>SUBUNIT</scope>
</reference>